<organism>
    <name type="scientific">Brucella ovis (strain ATCC 25840 / 63/290 / NCTC 10512)</name>
    <dbReference type="NCBI Taxonomy" id="444178"/>
    <lineage>
        <taxon>Bacteria</taxon>
        <taxon>Pseudomonadati</taxon>
        <taxon>Pseudomonadota</taxon>
        <taxon>Alphaproteobacteria</taxon>
        <taxon>Hyphomicrobiales</taxon>
        <taxon>Brucellaceae</taxon>
        <taxon>Brucella/Ochrobactrum group</taxon>
        <taxon>Brucella</taxon>
    </lineage>
</organism>
<gene>
    <name evidence="1" type="primary">mdh</name>
    <name type="ordered locus">BOV_1856</name>
</gene>
<evidence type="ECO:0000255" key="1">
    <source>
        <dbReference type="HAMAP-Rule" id="MF_00487"/>
    </source>
</evidence>
<name>MDH_BRUO2</name>
<protein>
    <recommendedName>
        <fullName evidence="1">Malate dehydrogenase</fullName>
        <ecNumber evidence="1">1.1.1.37</ecNumber>
    </recommendedName>
</protein>
<proteinExistence type="inferred from homology"/>
<sequence length="320" mass="33676">MARNKIALIGSGMIGGTLAHLAGLKELGDVVLFDIAEGTPQGKGLDIAESSPVDGFDAKFTGANDYAAIEGADVVIVTAGVPRKPGMSRDDLLGINLKVMEQVGAGIKKYAPEAFVICITNPLDAMVWALQKFSGLPAHKVVGMAGVLDSARFRYFLSEEFNVSVEDVTAFVLGGHGDSMVPLARYSTVAGIPLPDLVKMGWTSQDKLDKIIQRTRDGGAEIVGLLKTGSAFYAPAASAIQMAESYLKDKKRVLPVAAQLSGQYGVKDMYVGVPTVIGANGVERIIEIDLDKDEKAQFDKSVASVAGLCEACIGIAPSLK</sequence>
<accession>A5VSQ4</accession>
<reference key="1">
    <citation type="journal article" date="2009" name="PLoS ONE">
        <title>Genome degradation in Brucella ovis corresponds with narrowing of its host range and tissue tropism.</title>
        <authorList>
            <person name="Tsolis R.M."/>
            <person name="Seshadri R."/>
            <person name="Santos R.L."/>
            <person name="Sangari F.J."/>
            <person name="Lobo J.M."/>
            <person name="de Jong M.F."/>
            <person name="Ren Q."/>
            <person name="Myers G."/>
            <person name="Brinkac L.M."/>
            <person name="Nelson W.C."/>
            <person name="Deboy R.T."/>
            <person name="Angiuoli S."/>
            <person name="Khouri H."/>
            <person name="Dimitrov G."/>
            <person name="Robinson J.R."/>
            <person name="Mulligan S."/>
            <person name="Walker R.L."/>
            <person name="Elzer P.E."/>
            <person name="Hassan K.A."/>
            <person name="Paulsen I.T."/>
        </authorList>
    </citation>
    <scope>NUCLEOTIDE SEQUENCE [LARGE SCALE GENOMIC DNA]</scope>
    <source>
        <strain>ATCC 25840 / 63/290 / NCTC 10512</strain>
    </source>
</reference>
<feature type="chain" id="PRO_1000026468" description="Malate dehydrogenase">
    <location>
        <begin position="1"/>
        <end position="320"/>
    </location>
</feature>
<feature type="active site" description="Proton acceptor" evidence="1">
    <location>
        <position position="176"/>
    </location>
</feature>
<feature type="binding site" evidence="1">
    <location>
        <begin position="10"/>
        <end position="15"/>
    </location>
    <ligand>
        <name>NAD(+)</name>
        <dbReference type="ChEBI" id="CHEBI:57540"/>
    </ligand>
</feature>
<feature type="binding site" evidence="1">
    <location>
        <position position="34"/>
    </location>
    <ligand>
        <name>NAD(+)</name>
        <dbReference type="ChEBI" id="CHEBI:57540"/>
    </ligand>
</feature>
<feature type="binding site" evidence="1">
    <location>
        <position position="83"/>
    </location>
    <ligand>
        <name>substrate</name>
    </ligand>
</feature>
<feature type="binding site" evidence="1">
    <location>
        <position position="89"/>
    </location>
    <ligand>
        <name>substrate</name>
    </ligand>
</feature>
<feature type="binding site" evidence="1">
    <location>
        <position position="96"/>
    </location>
    <ligand>
        <name>NAD(+)</name>
        <dbReference type="ChEBI" id="CHEBI:57540"/>
    </ligand>
</feature>
<feature type="binding site" evidence="1">
    <location>
        <begin position="119"/>
        <end position="121"/>
    </location>
    <ligand>
        <name>NAD(+)</name>
        <dbReference type="ChEBI" id="CHEBI:57540"/>
    </ligand>
</feature>
<feature type="binding site" evidence="1">
    <location>
        <position position="121"/>
    </location>
    <ligand>
        <name>substrate</name>
    </ligand>
</feature>
<feature type="binding site" evidence="1">
    <location>
        <position position="152"/>
    </location>
    <ligand>
        <name>substrate</name>
    </ligand>
</feature>
<comment type="function">
    <text evidence="1">Catalyzes the reversible oxidation of malate to oxaloacetate.</text>
</comment>
<comment type="catalytic activity">
    <reaction evidence="1">
        <text>(S)-malate + NAD(+) = oxaloacetate + NADH + H(+)</text>
        <dbReference type="Rhea" id="RHEA:21432"/>
        <dbReference type="ChEBI" id="CHEBI:15378"/>
        <dbReference type="ChEBI" id="CHEBI:15589"/>
        <dbReference type="ChEBI" id="CHEBI:16452"/>
        <dbReference type="ChEBI" id="CHEBI:57540"/>
        <dbReference type="ChEBI" id="CHEBI:57945"/>
        <dbReference type="EC" id="1.1.1.37"/>
    </reaction>
</comment>
<comment type="similarity">
    <text evidence="1">Belongs to the LDH/MDH superfamily. MDH type 3 family.</text>
</comment>
<keyword id="KW-0520">NAD</keyword>
<keyword id="KW-0560">Oxidoreductase</keyword>
<keyword id="KW-0816">Tricarboxylic acid cycle</keyword>
<dbReference type="EC" id="1.1.1.37" evidence="1"/>
<dbReference type="EMBL" id="CP000708">
    <property type="protein sequence ID" value="ABQ61517.1"/>
    <property type="molecule type" value="Genomic_DNA"/>
</dbReference>
<dbReference type="RefSeq" id="WP_004686256.1">
    <property type="nucleotide sequence ID" value="NC_009505.1"/>
</dbReference>
<dbReference type="SMR" id="A5VSQ4"/>
<dbReference type="GeneID" id="97534787"/>
<dbReference type="KEGG" id="bov:BOV_1856"/>
<dbReference type="HOGENOM" id="CLU_045401_2_1_5"/>
<dbReference type="PhylomeDB" id="A5VSQ4"/>
<dbReference type="Proteomes" id="UP000006383">
    <property type="component" value="Chromosome I"/>
</dbReference>
<dbReference type="GO" id="GO:0004459">
    <property type="term" value="F:L-lactate dehydrogenase activity"/>
    <property type="evidence" value="ECO:0007669"/>
    <property type="project" value="TreeGrafter"/>
</dbReference>
<dbReference type="GO" id="GO:0030060">
    <property type="term" value="F:L-malate dehydrogenase (NAD+) activity"/>
    <property type="evidence" value="ECO:0007669"/>
    <property type="project" value="UniProtKB-UniRule"/>
</dbReference>
<dbReference type="GO" id="GO:0006089">
    <property type="term" value="P:lactate metabolic process"/>
    <property type="evidence" value="ECO:0007669"/>
    <property type="project" value="TreeGrafter"/>
</dbReference>
<dbReference type="GO" id="GO:0006099">
    <property type="term" value="P:tricarboxylic acid cycle"/>
    <property type="evidence" value="ECO:0007669"/>
    <property type="project" value="UniProtKB-UniRule"/>
</dbReference>
<dbReference type="CDD" id="cd01339">
    <property type="entry name" value="LDH-like_MDH"/>
    <property type="match status" value="1"/>
</dbReference>
<dbReference type="FunFam" id="3.40.50.720:FF:000018">
    <property type="entry name" value="Malate dehydrogenase"/>
    <property type="match status" value="1"/>
</dbReference>
<dbReference type="FunFam" id="3.90.110.10:FF:000004">
    <property type="entry name" value="Malate dehydrogenase"/>
    <property type="match status" value="1"/>
</dbReference>
<dbReference type="Gene3D" id="3.90.110.10">
    <property type="entry name" value="Lactate dehydrogenase/glycoside hydrolase, family 4, C-terminal"/>
    <property type="match status" value="1"/>
</dbReference>
<dbReference type="Gene3D" id="3.40.50.720">
    <property type="entry name" value="NAD(P)-binding Rossmann-like Domain"/>
    <property type="match status" value="1"/>
</dbReference>
<dbReference type="HAMAP" id="MF_00487">
    <property type="entry name" value="Malate_dehydrog_3"/>
    <property type="match status" value="1"/>
</dbReference>
<dbReference type="InterPro" id="IPR001557">
    <property type="entry name" value="L-lactate/malate_DH"/>
</dbReference>
<dbReference type="InterPro" id="IPR022383">
    <property type="entry name" value="Lactate/malate_DH_C"/>
</dbReference>
<dbReference type="InterPro" id="IPR001236">
    <property type="entry name" value="Lactate/malate_DH_N"/>
</dbReference>
<dbReference type="InterPro" id="IPR015955">
    <property type="entry name" value="Lactate_DH/Glyco_Ohase_4_C"/>
</dbReference>
<dbReference type="InterPro" id="IPR011275">
    <property type="entry name" value="Malate_DH_type3"/>
</dbReference>
<dbReference type="InterPro" id="IPR036291">
    <property type="entry name" value="NAD(P)-bd_dom_sf"/>
</dbReference>
<dbReference type="NCBIfam" id="TIGR01763">
    <property type="entry name" value="MalateDH_bact"/>
    <property type="match status" value="1"/>
</dbReference>
<dbReference type="NCBIfam" id="NF004863">
    <property type="entry name" value="PRK06223.1"/>
    <property type="match status" value="1"/>
</dbReference>
<dbReference type="PANTHER" id="PTHR43128">
    <property type="entry name" value="L-2-HYDROXYCARBOXYLATE DEHYDROGENASE (NAD(P)(+))"/>
    <property type="match status" value="1"/>
</dbReference>
<dbReference type="PANTHER" id="PTHR43128:SF16">
    <property type="entry name" value="L-LACTATE DEHYDROGENASE"/>
    <property type="match status" value="1"/>
</dbReference>
<dbReference type="Pfam" id="PF02866">
    <property type="entry name" value="Ldh_1_C"/>
    <property type="match status" value="1"/>
</dbReference>
<dbReference type="Pfam" id="PF00056">
    <property type="entry name" value="Ldh_1_N"/>
    <property type="match status" value="1"/>
</dbReference>
<dbReference type="PIRSF" id="PIRSF000102">
    <property type="entry name" value="Lac_mal_DH"/>
    <property type="match status" value="1"/>
</dbReference>
<dbReference type="PRINTS" id="PR00086">
    <property type="entry name" value="LLDHDRGNASE"/>
</dbReference>
<dbReference type="SUPFAM" id="SSF56327">
    <property type="entry name" value="LDH C-terminal domain-like"/>
    <property type="match status" value="1"/>
</dbReference>
<dbReference type="SUPFAM" id="SSF51735">
    <property type="entry name" value="NAD(P)-binding Rossmann-fold domains"/>
    <property type="match status" value="1"/>
</dbReference>